<proteinExistence type="evidence at protein level"/>
<organism>
    <name type="scientific">Escherichia coli (strain K12)</name>
    <dbReference type="NCBI Taxonomy" id="83333"/>
    <lineage>
        <taxon>Bacteria</taxon>
        <taxon>Pseudomonadati</taxon>
        <taxon>Pseudomonadota</taxon>
        <taxon>Gammaproteobacteria</taxon>
        <taxon>Enterobacterales</taxon>
        <taxon>Enterobacteriaceae</taxon>
        <taxon>Escherichia</taxon>
    </lineage>
</organism>
<evidence type="ECO:0000269" key="1">
    <source>
    </source>
</evidence>
<evidence type="ECO:0000269" key="2">
    <source>
    </source>
</evidence>
<evidence type="ECO:0000269" key="3">
    <source>
    </source>
</evidence>
<evidence type="ECO:0000269" key="4">
    <source>
    </source>
</evidence>
<evidence type="ECO:0000269" key="5">
    <source>
    </source>
</evidence>
<evidence type="ECO:0000269" key="6">
    <source>
    </source>
</evidence>
<evidence type="ECO:0000269" key="7">
    <source>
    </source>
</evidence>
<evidence type="ECO:0000269" key="8">
    <source>
    </source>
</evidence>
<evidence type="ECO:0000269" key="9">
    <source>
    </source>
</evidence>
<evidence type="ECO:0000269" key="10">
    <source>
    </source>
</evidence>
<evidence type="ECO:0000269" key="11">
    <source>
    </source>
</evidence>
<evidence type="ECO:0000269" key="12">
    <source>
    </source>
</evidence>
<evidence type="ECO:0000269" key="13">
    <source>
    </source>
</evidence>
<evidence type="ECO:0000269" key="14">
    <source>
    </source>
</evidence>
<evidence type="ECO:0000269" key="15">
    <source>
    </source>
</evidence>
<evidence type="ECO:0000269" key="16">
    <source>
    </source>
</evidence>
<evidence type="ECO:0000269" key="17">
    <source>
    </source>
</evidence>
<evidence type="ECO:0000269" key="18">
    <source>
    </source>
</evidence>
<evidence type="ECO:0000269" key="19">
    <source>
    </source>
</evidence>
<evidence type="ECO:0000305" key="20"/>
<evidence type="ECO:0000305" key="21">
    <source>
    </source>
</evidence>
<evidence type="ECO:0007829" key="22">
    <source>
        <dbReference type="PDB" id="4FXH"/>
    </source>
</evidence>
<evidence type="ECO:0007829" key="23">
    <source>
        <dbReference type="PDB" id="4FXI"/>
    </source>
</evidence>
<feature type="chain" id="PRO_0000097245" description="mRNA interferase toxin RelE">
    <location>
        <begin position="1"/>
        <end position="95"/>
    </location>
</feature>
<feature type="active site" description="Proton acceptor" evidence="21">
    <location>
        <position position="52"/>
    </location>
</feature>
<feature type="active site" description="Proton donor" evidence="21">
    <location>
        <position position="81"/>
    </location>
</feature>
<feature type="site" description="Transition state stabilizer" evidence="21">
    <location>
        <position position="54"/>
    </location>
</feature>
<feature type="site" description="Transition state stabilizer" evidence="21">
    <location>
        <position position="61"/>
    </location>
</feature>
<feature type="mutagenesis site" description="Reduces mRNA cleavage rate constant 2100-fold. Reduces mRNA cleavage rate constant 1000000-fold; when associated with F-87." evidence="17">
    <original>K</original>
    <variation>A</variation>
    <location>
        <position position="52"/>
    </location>
</feature>
<feature type="mutagenesis site" description="Reduces mRNA cleavage rate constant 2700-fold." evidence="17">
    <original>K</original>
    <variation>A</variation>
    <location>
        <position position="54"/>
    </location>
</feature>
<feature type="mutagenesis site" description="Reduces mRNA cleavage rate constant 2700000-fold." evidence="11 17">
    <original>R</original>
    <variation>A</variation>
    <location>
        <position position="61"/>
    </location>
</feature>
<feature type="mutagenesis site" description="Significant reduction in endonuclease activity, still binds RelB." evidence="8">
    <original>RER</original>
    <variation>AEA</variation>
    <location>
        <begin position="81"/>
        <end position="83"/>
    </location>
</feature>
<feature type="mutagenesis site" description="Reduces mRNA cleavage rate constant 60000-fold, significantly less translation inhibition which is countered by RelB. Almost complete loss of mRNA cleavage; when associated with F-87." evidence="3 11 17">
    <original>R</original>
    <variation>A</variation>
    <location>
        <position position="81"/>
    </location>
</feature>
<feature type="mutagenesis site" description="Reduces mRNA cleavage rate constant 180000-fold." evidence="11 17">
    <original>Y</original>
    <variation>A</variation>
    <location>
        <position position="87"/>
    </location>
</feature>
<feature type="mutagenesis site" description="Reduces mRNA cleavage rate constant 130-fold. Almost complete loss of mRNA cleavage; when associated with A-81 (Ref.20). Reduces mRNA cleavage rate constant 1000000-fold; when associated with A-52 (Ref.18)." evidence="11 17">
    <original>Y</original>
    <variation>F</variation>
    <location>
        <position position="87"/>
    </location>
</feature>
<feature type="mutagenesis site" description="Does not inhibit translation." evidence="3">
    <original>AVKRIL</original>
    <variation>VTVTVT</variation>
    <location>
        <begin position="90"/>
        <end position="95"/>
    </location>
</feature>
<feature type="strand" evidence="23">
    <location>
        <begin position="4"/>
        <end position="7"/>
    </location>
</feature>
<feature type="helix" evidence="23">
    <location>
        <begin position="9"/>
        <end position="17"/>
    </location>
</feature>
<feature type="helix" evidence="23">
    <location>
        <begin position="20"/>
        <end position="35"/>
    </location>
</feature>
<feature type="helix" evidence="23">
    <location>
        <begin position="40"/>
        <end position="42"/>
    </location>
</feature>
<feature type="strand" evidence="23">
    <location>
        <begin position="45"/>
        <end position="47"/>
    </location>
</feature>
<feature type="strand" evidence="23">
    <location>
        <begin position="50"/>
        <end position="54"/>
    </location>
</feature>
<feature type="turn" evidence="22">
    <location>
        <begin position="56"/>
        <end position="59"/>
    </location>
</feature>
<feature type="strand" evidence="23">
    <location>
        <begin position="60"/>
        <end position="67"/>
    </location>
</feature>
<feature type="helix" evidence="23">
    <location>
        <begin position="68"/>
        <end position="70"/>
    </location>
</feature>
<feature type="strand" evidence="23">
    <location>
        <begin position="72"/>
        <end position="80"/>
    </location>
</feature>
<feature type="helix" evidence="23">
    <location>
        <begin position="82"/>
        <end position="84"/>
    </location>
</feature>
<feature type="helix" evidence="23">
    <location>
        <begin position="85"/>
        <end position="94"/>
    </location>
</feature>
<sequence length="95" mass="11225">MAYFLDFDERALKEWRKLGSTVREQLKKKLVEVLESPRIEANKLRGMPDCYKIKLRSSGYRLVYQVIDEKVVVFVISVGKRERSEVYSEAVKRIL</sequence>
<gene>
    <name type="primary">relE</name>
    <name type="ordered locus">b1563</name>
    <name type="ordered locus">JW1555</name>
</gene>
<keyword id="KW-0002">3D-structure</keyword>
<keyword id="KW-0046">Antibiotic resistance</keyword>
<keyword id="KW-0255">Endonuclease</keyword>
<keyword id="KW-0378">Hydrolase</keyword>
<keyword id="KW-0540">Nuclease</keyword>
<keyword id="KW-1185">Reference proteome</keyword>
<keyword id="KW-0678">Repressor</keyword>
<keyword id="KW-0694">RNA-binding</keyword>
<keyword id="KW-0699">rRNA-binding</keyword>
<keyword id="KW-0346">Stress response</keyword>
<keyword id="KW-1277">Toxin-antitoxin system</keyword>
<keyword id="KW-0804">Transcription</keyword>
<keyword id="KW-0805">Transcription regulation</keyword>
<accession>P0C077</accession>
<accession>P07008</accession>
<protein>
    <recommendedName>
        <fullName>mRNA interferase toxin RelE</fullName>
        <ecNumber>3.1.-.-</ecNumber>
    </recommendedName>
    <alternativeName>
        <fullName>Endoribonuclease RelE</fullName>
    </alternativeName>
    <alternativeName>
        <fullName>Toxin RelE</fullName>
    </alternativeName>
</protein>
<name>RELE_ECOLI</name>
<reference key="1">
    <citation type="journal article" date="1985" name="EMBO J.">
        <title>Sequence of the relB transcription unit from Escherichia coli and identification of the relB gene.</title>
        <authorList>
            <person name="Bech F.W."/>
            <person name="Joergensen S.T."/>
            <person name="Diderichsen B."/>
            <person name="Karlstroem O.H."/>
        </authorList>
    </citation>
    <scope>NUCLEOTIDE SEQUENCE [GENOMIC DNA]</scope>
    <source>
        <strain>K12 / CS520</strain>
    </source>
</reference>
<reference key="2">
    <citation type="journal article" date="1996" name="DNA Res.">
        <title>A 570-kb DNA sequence of the Escherichia coli K-12 genome corresponding to the 28.0-40.1 min region on the linkage map.</title>
        <authorList>
            <person name="Aiba H."/>
            <person name="Baba T."/>
            <person name="Fujita K."/>
            <person name="Hayashi K."/>
            <person name="Inada T."/>
            <person name="Isono K."/>
            <person name="Itoh T."/>
            <person name="Kasai H."/>
            <person name="Kashimoto K."/>
            <person name="Kimura S."/>
            <person name="Kitakawa M."/>
            <person name="Kitagawa M."/>
            <person name="Makino K."/>
            <person name="Miki T."/>
            <person name="Mizobuchi K."/>
            <person name="Mori H."/>
            <person name="Mori T."/>
            <person name="Motomura K."/>
            <person name="Nakade S."/>
            <person name="Nakamura Y."/>
            <person name="Nashimoto H."/>
            <person name="Nishio Y."/>
            <person name="Oshima T."/>
            <person name="Saito N."/>
            <person name="Sampei G."/>
            <person name="Seki Y."/>
            <person name="Sivasundaram S."/>
            <person name="Tagami H."/>
            <person name="Takeda J."/>
            <person name="Takemoto K."/>
            <person name="Takeuchi Y."/>
            <person name="Wada C."/>
            <person name="Yamamoto Y."/>
            <person name="Horiuchi T."/>
        </authorList>
    </citation>
    <scope>NUCLEOTIDE SEQUENCE [LARGE SCALE GENOMIC DNA]</scope>
    <source>
        <strain>K12 / W3110 / ATCC 27325 / DSM 5911</strain>
    </source>
</reference>
<reference key="3">
    <citation type="journal article" date="1997" name="Science">
        <title>The complete genome sequence of Escherichia coli K-12.</title>
        <authorList>
            <person name="Blattner F.R."/>
            <person name="Plunkett G. III"/>
            <person name="Bloch C.A."/>
            <person name="Perna N.T."/>
            <person name="Burland V."/>
            <person name="Riley M."/>
            <person name="Collado-Vides J."/>
            <person name="Glasner J.D."/>
            <person name="Rode C.K."/>
            <person name="Mayhew G.F."/>
            <person name="Gregor J."/>
            <person name="Davis N.W."/>
            <person name="Kirkpatrick H.A."/>
            <person name="Goeden M.A."/>
            <person name="Rose D.J."/>
            <person name="Mau B."/>
            <person name="Shao Y."/>
        </authorList>
    </citation>
    <scope>NUCLEOTIDE SEQUENCE [LARGE SCALE GENOMIC DNA]</scope>
    <source>
        <strain>K12 / MG1655 / ATCC 47076</strain>
    </source>
</reference>
<reference key="4">
    <citation type="journal article" date="2006" name="Mol. Syst. Biol.">
        <title>Highly accurate genome sequences of Escherichia coli K-12 strains MG1655 and W3110.</title>
        <authorList>
            <person name="Hayashi K."/>
            <person name="Morooka N."/>
            <person name="Yamamoto Y."/>
            <person name="Fujita K."/>
            <person name="Isono K."/>
            <person name="Choi S."/>
            <person name="Ohtsubo E."/>
            <person name="Baba T."/>
            <person name="Wanner B.L."/>
            <person name="Mori H."/>
            <person name="Horiuchi T."/>
        </authorList>
    </citation>
    <scope>NUCLEOTIDE SEQUENCE [LARGE SCALE GENOMIC DNA]</scope>
    <source>
        <strain>K12 / W3110 / ATCC 27325 / DSM 5911</strain>
    </source>
</reference>
<reference key="5">
    <citation type="journal article" date="1998" name="Mol. Microbiol.">
        <title>The Escherichia coli relBE genes belong to a new toxin-antitoxin gene family.</title>
        <authorList>
            <person name="Gotfredsen M."/>
            <person name="Gerdes K."/>
        </authorList>
    </citation>
    <scope>FUNCTION AS A TOXIN</scope>
    <scope>FUNCTION AS A TRANSCRIPTIONAL COREPRESSOR</scope>
    <scope>INDUCTION</scope>
</reference>
<reference key="6">
    <citation type="journal article" date="2001" name="J. Bacteriol.">
        <title>Purification of the RelB and RelE proteins of Escherichia coli: RelE binds to RelB and to ribosomes.</title>
        <authorList>
            <person name="Galvani C."/>
            <person name="Terry J."/>
            <person name="Ishiguro E.E."/>
        </authorList>
    </citation>
    <scope>FUNCTION</scope>
    <scope>SUBUNIT</scope>
    <scope>RIBOSOME-BINDING</scope>
</reference>
<reference key="7">
    <citation type="journal article" date="2001" name="Proc. Natl. Acad. Sci. U.S.A.">
        <title>RelE, a global inhibitor of translation, is activated during nutritional stress.</title>
        <authorList>
            <person name="Christensen S.K."/>
            <person name="Mikkelsen M."/>
            <person name="Pedersen K."/>
            <person name="Gerdes K."/>
        </authorList>
    </citation>
    <scope>FUNCTION AS A TRANSLATION INHIBITOR</scope>
    <scope>INDUCTION</scope>
    <scope>DISRUPTION PHENOTYPE</scope>
</reference>
<reference key="8">
    <citation type="journal article" date="2002" name="Mol. Microbiol.">
        <title>Rapid induction and reversal of a bacteriostatic condition by controlled expression of toxins and antitoxins.</title>
        <authorList>
            <person name="Pedersen K."/>
            <person name="Christensen S.K."/>
            <person name="Gerdes K."/>
        </authorList>
    </citation>
    <scope>FUNCTION AS A TOXIN</scope>
    <scope>MUTAGENESIS OF ARG-81 AND 90-ALA--LEU-95</scope>
    <source>
        <strain>K12</strain>
    </source>
</reference>
<reference key="9">
    <citation type="journal article" date="2003" name="Cell">
        <title>The bacterial toxin RelE displays codon-specific cleavage of mRNAs in the ribosomal A site.</title>
        <authorList>
            <person name="Pedersen K."/>
            <person name="Zavialov A.V."/>
            <person name="Pavlov M.Y."/>
            <person name="Elf J."/>
            <person name="Gerdes K."/>
            <person name="Ehrenberg M."/>
        </authorList>
    </citation>
    <scope>FUNCTION AS AN ENDORIBONUCLEASE ON THE RIBOSOME</scope>
    <scope>SUBSTRATE SPECIFICITY</scope>
</reference>
<reference key="10">
    <citation type="journal article" date="2004" name="J. Bacteriol.">
        <title>Specialized persister cells and the mechanism of multidrug tolerance in Escherichia coli.</title>
        <authorList>
            <person name="Keren I."/>
            <person name="Shah D."/>
            <person name="Spoering A."/>
            <person name="Kaldalu N."/>
            <person name="Lewis K."/>
        </authorList>
    </citation>
    <scope>RELATION WITH PERSISTERS</scope>
</reference>
<reference key="11">
    <citation type="journal article" date="2009" name="PLoS ONE">
        <title>A differential effect of E. coli toxin-antitoxin systems on cell death in liquid media and biofilm formation.</title>
        <authorList>
            <person name="Kolodkin-Gal I."/>
            <person name="Verdiger R."/>
            <person name="Shlosberg-Fedida A."/>
            <person name="Engelberg-Kulka H."/>
        </authorList>
    </citation>
    <scope>FUNCTION IN CELL DEATH</scope>
    <scope>DISRUPTION PHENOTYPE</scope>
    <scope>ANTIBIOTIC RESISTANCE</scope>
    <source>
        <strain>K12 / MC4100 / ATCC 35695 / DSM 6574</strain>
    </source>
</reference>
<reference key="12">
    <citation type="journal article" date="2008" name="J. Mol. Biol.">
        <title>Structural mechanism of transcriptional autorepression of the Escherichia coli RelB/RelE antitoxin/toxin module.</title>
        <authorList>
            <person name="Li G.Y."/>
            <person name="Zhang Y."/>
            <person name="Inouye M."/>
            <person name="Ikura M."/>
        </authorList>
    </citation>
    <scope>FUNCTION</scope>
    <scope>SUBUNIT</scope>
    <scope>INDUCTION</scope>
</reference>
<reference key="13">
    <citation type="journal article" date="2008" name="Mol. Microbiol.">
        <title>Messenger RNA interferase RelE controls relBE transcription by conditional cooperativity.</title>
        <authorList>
            <person name="Overgaard M."/>
            <person name="Borch J."/>
            <person name="Joergensen M.G."/>
            <person name="Gerdes K."/>
        </authorList>
    </citation>
    <scope>FUNCTION</scope>
    <scope>SUBUNIT</scope>
    <scope>INDUCTION</scope>
    <source>
        <strain>K12</strain>
    </source>
</reference>
<reference key="14">
    <citation type="journal article" date="2009" name="J. Mol. Biol.">
        <title>RelB and RelE of Escherichia coli form a tight complex that represses transcription via the ribbon-helix-helix motif in RelB.</title>
        <authorList>
            <person name="Overgaard M."/>
            <person name="Borch J."/>
            <person name="Gerdes K."/>
        </authorList>
    </citation>
    <scope>FUNCTION</scope>
    <scope>SUBUNIT</scope>
    <scope>INDUCTION</scope>
    <source>
        <strain>K12</strain>
    </source>
</reference>
<reference key="15">
    <citation type="journal article" date="2009" name="Mol. Cell">
        <title>Hydroxyurea induces hydroxyl radical-mediated cell death in Escherichia coli.</title>
        <authorList>
            <person name="Davies B.W."/>
            <person name="Kohanski M.A."/>
            <person name="Simmons L.A."/>
            <person name="Winkler J.A."/>
            <person name="Collins J.J."/>
            <person name="Walker G.C."/>
        </authorList>
    </citation>
    <scope>FUNCTION</scope>
    <scope>DISRUPTION PHENOTYPE</scope>
    <source>
        <strain>K12 / MC4100 / ATCC 35695 / DSM 6574</strain>
    </source>
</reference>
<reference key="16">
    <citation type="journal article" date="2011" name="J. Biol. Chem.">
        <title>Bacterial toxin RelE mediates frequent codon-independent mRNA cleavage from the 5' end of coding regions in vivo.</title>
        <authorList>
            <person name="Hurley J.M."/>
            <person name="Cruz J.W."/>
            <person name="Ouyang M."/>
            <person name="Woychik N.A."/>
        </authorList>
    </citation>
    <scope>FUNCTION</scope>
    <scope>SUBSTRATE SPECIFICITY</scope>
    <source>
        <strain>K12 / BW25113</strain>
    </source>
</reference>
<reference key="17">
    <citation type="journal article" date="2011" name="Proc. Natl. Acad. Sci. U.S.A.">
        <title>Bacterial persistence by RNA endonucleases.</title>
        <authorList>
            <person name="Maisonneuve E."/>
            <person name="Shakespeare L.J."/>
            <person name="Joergensen M.G."/>
            <person name="Gerdes K."/>
        </authorList>
    </citation>
    <scope>RETRACTED PAPER</scope>
    <source>
        <strain>K12 / MG1655 / ATCC 47076</strain>
    </source>
</reference>
<reference key="18">
    <citation type="journal article" date="2018" name="Proc. Natl. Acad. Sci. U.S.A.">
        <authorList>
            <person name="Maisonneuve E."/>
            <person name="Shakespeare L.J."/>
            <person name="Joergensen M.G."/>
            <person name="Gerdes K."/>
        </authorList>
    </citation>
    <scope>RETRACTION NOTICE OF PUBMED:21788497</scope>
</reference>
<reference key="19">
    <citation type="journal article" date="2012" name="J. Bacteriol.">
        <title>RelE-mediated dormancy is enhanced at high cell density in Escherichia coli.</title>
        <authorList>
            <person name="Tashiro Y."/>
            <person name="Kawata K."/>
            <person name="Taniuchi A."/>
            <person name="Kakinuma K."/>
            <person name="May T."/>
            <person name="Okabe S."/>
        </authorList>
    </citation>
    <scope>FUNCTION IN DORMANCY</scope>
    <scope>ANTIBIOTIC RESISTANCE</scope>
    <source>
        <strain>K12 / MG1655 / ATCC 47076</strain>
    </source>
</reference>
<reference key="20">
    <citation type="journal article" date="2013" name="BMC Microbiol.">
        <title>Transcriptional cross-activation between toxin-antitoxin systems of Escherichia coli.</title>
        <authorList>
            <person name="Kasari V."/>
            <person name="Mets T."/>
            <person name="Tenson T."/>
            <person name="Kaldalu N."/>
        </authorList>
    </citation>
    <scope>FUNCTION</scope>
    <scope>INDUCTION BY OTHER TA SYSTEMS</scope>
    <source>
        <strain>K12 / BW25113</strain>
    </source>
</reference>
<reference key="21">
    <citation type="journal article" date="2013" name="Biochemistry">
        <title>Bacterial toxin RelE: a highly efficient ribonuclease with exquisite substrate specificity using atypical catalytic residues.</title>
        <authorList>
            <person name="Griffin M.A."/>
            <person name="Davis J.H."/>
            <person name="Strobel S.A."/>
        </authorList>
    </citation>
    <scope>FUNCTION</scope>
    <scope>PROBABLE ACTIVE SITE</scope>
    <scope>MUTAGENESIS OF LYS-52; LYS-54; ARG-61; ARG-81 AND TYR-87</scope>
    <source>
        <strain>K12 / MG1655 / ATCC 47076</strain>
    </source>
</reference>
<reference key="22">
    <citation type="journal article" date="2009" name="Prog. Mol. Biol. Transl. Sci.">
        <title>mRNA interferases, sequence-specific endoribonucleases from the toxin-antitoxin systems.</title>
        <authorList>
            <person name="Yamaguchi Y."/>
            <person name="Inouye M."/>
        </authorList>
    </citation>
    <scope>REVIEW</scope>
</reference>
<reference key="23">
    <citation type="journal article" date="2009" name="Cell">
        <title>The structural basis for mRNA recognition and cleavage by the ribosome-dependent endonuclease RelE.</title>
        <authorList>
            <person name="Neubauer C."/>
            <person name="Gao Y.G."/>
            <person name="Andersen K.R."/>
            <person name="Dunham C.M."/>
            <person name="Kelley A.C."/>
            <person name="Hentschel J."/>
            <person name="Gerdes K."/>
            <person name="Ramakrishnan V."/>
            <person name="Brodersen D.E."/>
        </authorList>
    </citation>
    <scope>X-RAY CRYSTALLOGRAPHY (2.5 ANGSTROMS) IN ISOLATION AND BOUND TO RIBOSOMES BEFORE AND AFTER MRNA CLEAVAGE</scope>
    <scope>FUNCTION</scope>
    <scope>RIBOSOME-BINDING</scope>
    <scope>RRNA-BINDING</scope>
    <scope>MECHANISM OF RNA CLEAVAGE</scope>
    <scope>MUTAGENESIS OF ARG-61; ARG-81 AND TYR-87</scope>
</reference>
<reference key="24">
    <citation type="journal article" date="2009" name="J. Biol. Chem.">
        <title>Inhibitory mechanism of Escherichia coli RelE-RelB toxin-antitoxin module involves a helix displacement near an mRNA interferase active site.</title>
        <authorList>
            <person name="Li G.Y."/>
            <person name="Zhang Y."/>
            <person name="Inouye M."/>
            <person name="Ikura M."/>
        </authorList>
    </citation>
    <scope>STRUCTURE BY NMR OF MUTANT 81-ARG--ARG-83 IN COMPLEX WITH RELB FRAGMENT</scope>
    <scope>SUBUNIT</scope>
</reference>
<reference key="25">
    <citation type="journal article" date="2012" name="Structure">
        <title>The crystal structure of the intact E. coli RelBE toxin-antitoxin complex provides the structural basis for conditional cooperativity.</title>
        <authorList>
            <person name="Boggild A."/>
            <person name="Sofos N."/>
            <person name="Andersen K.R."/>
            <person name="Feddersen A."/>
            <person name="Easter A.D."/>
            <person name="Passmore L.A."/>
            <person name="Brodersen D.E."/>
        </authorList>
    </citation>
    <scope>X-RAY CRYSTALLOGRAPHY (1.80 ANGSTROMS) AND X-RAY CRYSTALLOGRAPHY (2.75 ANGSTROMS) IN COMPLEX WITH RELE</scope>
    <scope>FUNCTION</scope>
    <scope>SUBUNIT</scope>
    <scope>INDUCTION</scope>
</reference>
<dbReference type="EC" id="3.1.-.-"/>
<dbReference type="EMBL" id="X02405">
    <property type="protein sequence ID" value="CAA26251.1"/>
    <property type="molecule type" value="Genomic_DNA"/>
</dbReference>
<dbReference type="EMBL" id="U00096">
    <property type="protein sequence ID" value="AAC74636.1"/>
    <property type="molecule type" value="Genomic_DNA"/>
</dbReference>
<dbReference type="EMBL" id="AP009048">
    <property type="protein sequence ID" value="BAA15262.1"/>
    <property type="molecule type" value="Genomic_DNA"/>
</dbReference>
<dbReference type="PIR" id="B22830">
    <property type="entry name" value="QQECR1"/>
</dbReference>
<dbReference type="RefSeq" id="NP_416081.1">
    <property type="nucleotide sequence ID" value="NC_000913.3"/>
</dbReference>
<dbReference type="RefSeq" id="WP_000323025.1">
    <property type="nucleotide sequence ID" value="NZ_SSUV01000001.1"/>
</dbReference>
<dbReference type="PDB" id="2KC8">
    <property type="method" value="NMR"/>
    <property type="chains" value="A=1-95"/>
</dbReference>
<dbReference type="PDB" id="2KC9">
    <property type="method" value="NMR"/>
    <property type="chains" value="A=1-95"/>
</dbReference>
<dbReference type="PDB" id="4FXE">
    <property type="method" value="X-ray"/>
    <property type="resolution" value="2.75 A"/>
    <property type="chains" value="D/E/F=1-95"/>
</dbReference>
<dbReference type="PDB" id="4FXH">
    <property type="method" value="X-ray"/>
    <property type="resolution" value="2.40 A"/>
    <property type="chains" value="A/B=1-95"/>
</dbReference>
<dbReference type="PDB" id="4FXI">
    <property type="method" value="X-ray"/>
    <property type="resolution" value="1.80 A"/>
    <property type="chains" value="A/B/C=1-95"/>
</dbReference>
<dbReference type="PDB" id="4V7J">
    <property type="method" value="X-ray"/>
    <property type="resolution" value="3.30 A"/>
    <property type="chains" value="Ay/By=1-95"/>
</dbReference>
<dbReference type="PDB" id="4V7K">
    <property type="method" value="X-ray"/>
    <property type="resolution" value="3.60 A"/>
    <property type="chains" value="Ay/By=1-95"/>
</dbReference>
<dbReference type="PDBsum" id="2KC8"/>
<dbReference type="PDBsum" id="2KC9"/>
<dbReference type="PDBsum" id="4FXE"/>
<dbReference type="PDBsum" id="4FXH"/>
<dbReference type="PDBsum" id="4FXI"/>
<dbReference type="PDBsum" id="4V7J"/>
<dbReference type="PDBsum" id="4V7K"/>
<dbReference type="BMRB" id="P0C077"/>
<dbReference type="SMR" id="P0C077"/>
<dbReference type="BioGRID" id="4260243">
    <property type="interactions" value="259"/>
</dbReference>
<dbReference type="ComplexPortal" id="CPX-1081">
    <property type="entry name" value="RelBE toxin-antitoxin complex"/>
</dbReference>
<dbReference type="DIP" id="DIP-35978N"/>
<dbReference type="FunCoup" id="P0C077">
    <property type="interactions" value="129"/>
</dbReference>
<dbReference type="IntAct" id="P0C077">
    <property type="interactions" value="12"/>
</dbReference>
<dbReference type="STRING" id="511145.b1563"/>
<dbReference type="jPOST" id="P0C077"/>
<dbReference type="PaxDb" id="511145-b1563"/>
<dbReference type="EnsemblBacteria" id="AAC74636">
    <property type="protein sequence ID" value="AAC74636"/>
    <property type="gene ID" value="b1563"/>
</dbReference>
<dbReference type="GeneID" id="947549"/>
<dbReference type="KEGG" id="ecj:JW1555"/>
<dbReference type="KEGG" id="eco:b1563"/>
<dbReference type="KEGG" id="ecoc:C3026_09020"/>
<dbReference type="PATRIC" id="fig|1411691.4.peg.699"/>
<dbReference type="EchoBASE" id="EB1121"/>
<dbReference type="eggNOG" id="COG2026">
    <property type="taxonomic scope" value="Bacteria"/>
</dbReference>
<dbReference type="HOGENOM" id="CLU_155761_0_1_6"/>
<dbReference type="InParanoid" id="P0C077"/>
<dbReference type="OMA" id="GHADRYK"/>
<dbReference type="OrthoDB" id="9801234at2"/>
<dbReference type="PhylomeDB" id="P0C077"/>
<dbReference type="BioCyc" id="EcoCyc:EG11131-MONOMER"/>
<dbReference type="BioCyc" id="MetaCyc:EG11131-MONOMER"/>
<dbReference type="EvolutionaryTrace" id="P0C077"/>
<dbReference type="PRO" id="PR:P0C077"/>
<dbReference type="Proteomes" id="UP000000625">
    <property type="component" value="Chromosome"/>
</dbReference>
<dbReference type="CollecTF" id="EXPREG_00000890"/>
<dbReference type="GO" id="GO:0032993">
    <property type="term" value="C:protein-DNA complex"/>
    <property type="evidence" value="ECO:0000315"/>
    <property type="project" value="CollecTF"/>
</dbReference>
<dbReference type="GO" id="GO:0110001">
    <property type="term" value="C:toxin-antitoxin complex"/>
    <property type="evidence" value="ECO:0000353"/>
    <property type="project" value="ComplexPortal"/>
</dbReference>
<dbReference type="GO" id="GO:0001217">
    <property type="term" value="F:DNA-binding transcription repressor activity"/>
    <property type="evidence" value="ECO:0000315"/>
    <property type="project" value="CollecTF"/>
</dbReference>
<dbReference type="GO" id="GO:0004519">
    <property type="term" value="F:endonuclease activity"/>
    <property type="evidence" value="ECO:0000318"/>
    <property type="project" value="GO_Central"/>
</dbReference>
<dbReference type="GO" id="GO:0043022">
    <property type="term" value="F:ribosome binding"/>
    <property type="evidence" value="ECO:0000314"/>
    <property type="project" value="EcoCyc"/>
</dbReference>
<dbReference type="GO" id="GO:0004521">
    <property type="term" value="F:RNA endonuclease activity"/>
    <property type="evidence" value="ECO:0000314"/>
    <property type="project" value="EcoCyc"/>
</dbReference>
<dbReference type="GO" id="GO:0019843">
    <property type="term" value="F:rRNA binding"/>
    <property type="evidence" value="ECO:0007669"/>
    <property type="project" value="UniProtKB-KW"/>
</dbReference>
<dbReference type="GO" id="GO:0097351">
    <property type="term" value="F:toxin sequestering activity"/>
    <property type="evidence" value="ECO:0000269"/>
    <property type="project" value="DisProt"/>
</dbReference>
<dbReference type="GO" id="GO:0000976">
    <property type="term" value="F:transcription cis-regulatory region binding"/>
    <property type="evidence" value="ECO:0000315"/>
    <property type="project" value="CollecTF"/>
</dbReference>
<dbReference type="GO" id="GO:0034198">
    <property type="term" value="P:cellular response to amino acid starvation"/>
    <property type="evidence" value="ECO:0000270"/>
    <property type="project" value="EcoCyc"/>
</dbReference>
<dbReference type="GO" id="GO:0006402">
    <property type="term" value="P:mRNA catabolic process"/>
    <property type="evidence" value="ECO:0000314"/>
    <property type="project" value="EcoCyc"/>
</dbReference>
<dbReference type="GO" id="GO:0017148">
    <property type="term" value="P:negative regulation of translation"/>
    <property type="evidence" value="ECO:0000314"/>
    <property type="project" value="EcoCyc"/>
</dbReference>
<dbReference type="GO" id="GO:0006355">
    <property type="term" value="P:regulation of DNA-templated transcription"/>
    <property type="evidence" value="ECO:0000303"/>
    <property type="project" value="ComplexPortal"/>
</dbReference>
<dbReference type="GO" id="GO:0040008">
    <property type="term" value="P:regulation of growth"/>
    <property type="evidence" value="ECO:0000303"/>
    <property type="project" value="ComplexPortal"/>
</dbReference>
<dbReference type="GO" id="GO:0046677">
    <property type="term" value="P:response to antibiotic"/>
    <property type="evidence" value="ECO:0000315"/>
    <property type="project" value="EcoCyc"/>
</dbReference>
<dbReference type="GO" id="GO:0044010">
    <property type="term" value="P:single-species biofilm formation"/>
    <property type="evidence" value="ECO:0000314"/>
    <property type="project" value="ComplexPortal"/>
</dbReference>
<dbReference type="DisProt" id="DP01881"/>
<dbReference type="FunFam" id="3.30.2310.20:FF:000002">
    <property type="entry name" value="mRNA interferase toxin RelE"/>
    <property type="match status" value="1"/>
</dbReference>
<dbReference type="Gene3D" id="3.30.2310.20">
    <property type="entry name" value="RelE-like"/>
    <property type="match status" value="1"/>
</dbReference>
<dbReference type="InterPro" id="IPR007712">
    <property type="entry name" value="RelE/ParE_toxin"/>
</dbReference>
<dbReference type="InterPro" id="IPR035093">
    <property type="entry name" value="RelE/ParE_toxin_dom_sf"/>
</dbReference>
<dbReference type="NCBIfam" id="TIGR02385">
    <property type="entry name" value="RelE_StbE"/>
    <property type="match status" value="1"/>
</dbReference>
<dbReference type="PANTHER" id="PTHR35601:SF2">
    <property type="entry name" value="MRNA INTERFERASE TOXIN RELE"/>
    <property type="match status" value="1"/>
</dbReference>
<dbReference type="PANTHER" id="PTHR35601">
    <property type="entry name" value="TOXIN RELE"/>
    <property type="match status" value="1"/>
</dbReference>
<dbReference type="Pfam" id="PF05016">
    <property type="entry name" value="ParE_toxin"/>
    <property type="match status" value="1"/>
</dbReference>
<dbReference type="SUPFAM" id="SSF143011">
    <property type="entry name" value="RelE-like"/>
    <property type="match status" value="1"/>
</dbReference>
<comment type="function">
    <text evidence="1 2 3 4 5 6 7 10 11 13 14 15 17 19">Toxic component of a type II toxin-antitoxin (TA) system (PubMed:9767574). A sequence-specific, ribosome-dependent mRNA endoribonuclease that inhibits translation during amino acid starvation (the stringent response). In vitro acts by cleaving mRNA with high codon specificity in the ribosomal A site between positions 2 and 3. The stop codon UAG is cleaved at a fast rate while UAA and UGA are cleaved with intermediate and slow rates. In vitro mRNA cleavage can also occur in the ribosomal E site after peptide release from peptidyl-tRNA in the P site as well as on free 30S subunits (PubMed:12526800). In vivo cuts frequently in the first 100 codons, most frequently after the second and third base and rarely near the stop codon (PubMed:21324908). Overexpression of RelE results in the inhibition of bacterial growth and a sharp decrease in colony-forming ability which is neutralized by the labile cognate antitoxin RelB. Overexpression also sharply increases persisters (cells that neither grow nor die in the presence of bactericidal agents and are largely responsible for high levels of biofilm tolerance to antimicrobials) (PubMed:15576765). Plays a role in dormancy when expressed in high-density cells in the absence of antitoxin RelB; amino acid starvation and an unidentified extracellular factor promote dormancy, while expression of antitoxin RelB restores cell culturability (PubMed:22210768). Acts with RelB as a corepressor of relBE transcription, considerably increasing the repression of RelB alone. 2 RelB dimers bind to 2 operator sequences; DNA-binding and repression is stronger when complexed with toxin/corepressor RelE by conditional cooperativity (PubMed:18501926, PubMed:19747491, PubMed:22981948, PubMed:9767574).</text>
</comment>
<comment type="function">
    <text evidence="9 12">Seems to be a principal mediator of cell death in liquid media (PubMed:19707553). Implicated in hydroxy radical-mediated cell death induced by hydroxyurea treatment (PubMed:20005847).</text>
</comment>
<comment type="function">
    <text evidence="16">Cross-talk can occur between different TA systems. Ectopic expression of this toxin induces transcription of 7 tested TA systems (dinJ/yafQ, hicAB, mazEF, mqsRA, prlF(sohA)/yhaV, relBEF and yefM/yoeB) with specific cleavage of the relBEF mRNA produced immediately upstream and within the relB coding sequence. The cleaved mRNA can be translated into RelE, leading to a positive feedback cycle of RelE expression. The relBEF operon is required for transcription of the mazEF TA system operon during amino acid starvation.</text>
</comment>
<comment type="subunit">
    <text evidence="1 6 7 8 10 15">Forms an RelB(2)-RelE(2) heterotetramer (PubMed:18501926, PubMed:22981948). Also forms an RelB(2)-RelE heterotrimer (PubMed:18532983, PubMed:19747491). The RelB(2)-RelE complex is probably the one that binds DNA and represses transcription, possibly as 2 heterotrimers, 1 bound to each of 2 operators (PubMed:19747491, PubMed:22981948). RelE occupies the A site of the 70S ribosome, making extensive contacts with the 16S rRNA. Its presence blocks access of tRNAs and translation factors. RelB bound to RelE prevents RelE from entering the ribosomal A site and thus inhibits its endonuclease activity (PubMed:19297318).</text>
</comment>
<comment type="interaction">
    <interactant intactId="EBI-549378">
        <id>P0C077</id>
    </interactant>
    <interactant intactId="EBI-1124503">
        <id>P0C079</id>
        <label>relB</label>
    </interactant>
    <organismsDiffer>false</organismsDiffer>
    <experiments>3</experiments>
</comment>
<comment type="induction">
    <text evidence="2 6 7 10 15 16 18 19">By amino acid starvation, by glucose starvation and by chloramphenicol; induction is independent of ppGpp. Autorepressed by RelB, RelE acts as a corepressor (PubMed:18501926, PubMed:19747491, PubMed:22981948, PubMed:9767574). Member of the relBEF operon (PubMed:2990907). Operon induced by ectopic expression of toxins HicA, HipA, MazF, MqsR and itself, but not by YafQ (PubMed:23432955).</text>
</comment>
<comment type="disruption phenotype">
    <text evidence="2 9 12">Cells missing relBE have a higher steady-state level of translation during amino acid starvation than wild-type cells. They survive antibiotic treatment in log phase better than wild-type cells. Cells missing mazE-mazF survive hydroxyurea treatment better than wild-type; further disruption of relE-relB and tonB yields even better survival (PubMed:20005847).</text>
</comment>
<comment type="miscellaneous">
    <text evidence="10">There are estimated to be 550-1100 RelB and 50-100 RelE molecules in rapidly growing cells of MG1655; as they have quite high affinity for each other (dissociation constant of 0.33 nM) there is probably less than 1 free RelE molecule per cell. The RelB(2)-RelE complex has a half-life of over 70 minutes.</text>
</comment>
<comment type="similarity">
    <text evidence="20">Belongs to the RelE toxin family.</text>
</comment>